<proteinExistence type="evidence at protein level"/>
<evidence type="ECO:0000250" key="1"/>
<evidence type="ECO:0000250" key="2">
    <source>
        <dbReference type="UniProtKB" id="Q86VP6"/>
    </source>
</evidence>
<evidence type="ECO:0000256" key="3">
    <source>
        <dbReference type="SAM" id="MobiDB-lite"/>
    </source>
</evidence>
<evidence type="ECO:0000269" key="4">
    <source>
    </source>
</evidence>
<evidence type="ECO:0000269" key="5">
    <source>
    </source>
</evidence>
<evidence type="ECO:0000269" key="6">
    <source>
    </source>
</evidence>
<evidence type="ECO:0000305" key="7"/>
<evidence type="ECO:0007744" key="8">
    <source>
    </source>
</evidence>
<sequence>MASASYHISNLLEKMTSSDKDFRFMATNDLMTELQKDSIKLDDDSERKVVKMILKLLEDKNGEVQNLAVKCLGPLVSKVKEYQVETIVDTLCTNMLSDKEQLRDISSIGLKTVIGELPPASSGSALAANVCKKITGRLTSAIAKQEDVSVQLEALDIMADMLSRQGGLLVNFHPSILTCLLPQLTSPRLAVRKRTIIALGHLVMSCGNIVFVDLIEHLLSELSKNDSMSTTRTYIQCIAAISRQAGHRIGEYLEKIIPLVVKFCNVDDDELREYCIQAFESFVRRCPKEVYPHVSTIINICLKYLTYDPNYNYDDEDEDENAMDADGGDDDDQGSDDEYSDDDDMSWKVRRAAAKCLDAVVSTRHEMLPEFYKTVSPALISRFKEREENVKADVFHAYLSLLKQTRPVQSWLCDPDAMEQGETPLTMLQSQVPNIVKALHKQMKEKSVKTRQCCFNMLTELVNVLPGALTQHIPVLVPGIIFSLNDKSSSSNLKIDALSCLYVILCNHSPQVFHPHVQALVPPVVACVGDPFYKITSEALLVTQQLVKVIRPLDQPSSFDATPYIKDLFTCTIKRLKAADIDQEVKERAISCMGQIICNLGDNLGPDLSNTLQIFLERLKNEITRLTTVKALTLIAGSPLKIDLRPVLGEGVPILASFLRKNQRALKLGTLSALDILIKNYSDSLTAAMIDAVLDELPPLISESDMHVSQMAISFLTTLAKVYPSSLSKISGSILNELIGLVRSPLLQGGALSAMLDFFQALVVTGTNNLGYMDLLRMLTGPVYSQSTALTHKQSYYSIAKCVAALTRACPKEGPAVVGQFIQDVKNSRSTDSIRLLALLSLGEVGHHIDLSGQLELKSVILEAFSSPSEEVKSAASYALGSISVGNLPEYLPFVLQEITSQPKRQYLLLHSLKEIISSASVVGLKPYVENIWALLLKHCECAEEGTRNVVAECLGKLTLIDPETLLPRLKGYLISGSSYARSSVVTAVKFTISDHPQPIDPLLKNCIGDFLKTLEDPDLNVRRVALVTFNSAAHNKPSLIRDLLDSVLPHLYNETKVRKELIREVEMGPFKHTVDDGLDIRKAAFECMYTLLDSCLDRLDIFEFLNHVEDGLKDHYDIKMLTFLMLVRLSTLCPSAVLQRLDRLVEPLRATCTTKVKANSVKQEFEKQDELKRSAMRAVAALLTIPEAEKSPLMSEFQSQISSNPELAAIFESIQKDSSSTNLESMDTS</sequence>
<accession>P97536</accession>
<reference key="1">
    <citation type="journal article" date="1996" name="Biochem. Biophys. Res. Commun.">
        <title>Molecular cloning of a novel 120-kDa TBP-interacting protein.</title>
        <authorList>
            <person name="Yogosawa S."/>
            <person name="Makino Y."/>
            <person name="Yoshida T."/>
            <person name="Kishimoto T."/>
            <person name="Muramatsu M."/>
            <person name="Tamura T.-A."/>
        </authorList>
    </citation>
    <scope>NUCLEOTIDE SEQUENCE [MRNA]</scope>
    <scope>PARTIAL PROTEIN SEQUENCE</scope>
    <scope>INTERACTION WITH TBP</scope>
    <scope>SUBCELLULAR LOCATION</scope>
    <source>
        <tissue>Liver</tissue>
    </source>
</reference>
<reference key="2">
    <citation type="journal article" date="1999" name="Biochem. Biophys. Res. Commun.">
        <title>TIP120B: a novel TIP120-family protein that is expressed specifically in muscle tissues.</title>
        <authorList>
            <person name="Aoki T."/>
            <person name="Okada N."/>
            <person name="Ishida M."/>
            <person name="Yogosawa S."/>
            <person name="Makino Y."/>
            <person name="Tamura T.-A."/>
        </authorList>
    </citation>
    <scope>TISSUE SPECIFICITY</scope>
</reference>
<reference key="3">
    <citation type="journal article" date="1999" name="Mol. Cell. Biol.">
        <title>TATA-Binding protein-interacting protein 120, TIP120, stimulates three classes of eukaryotic transcription via a unique mechanism.</title>
        <authorList>
            <person name="Makino Y."/>
            <person name="Yogosawa S."/>
            <person name="Kayukawa K."/>
            <person name="Coin F."/>
            <person name="Egly J.-M."/>
            <person name="Wang Z.-X."/>
            <person name="Roeder R.G."/>
            <person name="Yamamoto K."/>
            <person name="Muramatsu M."/>
            <person name="Tamura T.-A."/>
        </authorList>
    </citation>
    <scope>FUNCTION</scope>
</reference>
<reference key="4">
    <citation type="journal article" date="2012" name="Nat. Commun.">
        <title>Quantitative maps of protein phosphorylation sites across 14 different rat organs and tissues.</title>
        <authorList>
            <person name="Lundby A."/>
            <person name="Secher A."/>
            <person name="Lage K."/>
            <person name="Nordsborg N.B."/>
            <person name="Dmytriyev A."/>
            <person name="Lundby C."/>
            <person name="Olsen J.V."/>
        </authorList>
    </citation>
    <scope>PHOSPHORYLATION [LARGE SCALE ANALYSIS] AT SER-335 AND SER-558</scope>
    <scope>IDENTIFICATION BY MASS SPECTROMETRY [LARGE SCALE ANALYSIS]</scope>
</reference>
<name>CAND1_RAT</name>
<organism>
    <name type="scientific">Rattus norvegicus</name>
    <name type="common">Rat</name>
    <dbReference type="NCBI Taxonomy" id="10116"/>
    <lineage>
        <taxon>Eukaryota</taxon>
        <taxon>Metazoa</taxon>
        <taxon>Chordata</taxon>
        <taxon>Craniata</taxon>
        <taxon>Vertebrata</taxon>
        <taxon>Euteleostomi</taxon>
        <taxon>Mammalia</taxon>
        <taxon>Eutheria</taxon>
        <taxon>Euarchontoglires</taxon>
        <taxon>Glires</taxon>
        <taxon>Rodentia</taxon>
        <taxon>Myomorpha</taxon>
        <taxon>Muroidea</taxon>
        <taxon>Muridae</taxon>
        <taxon>Murinae</taxon>
        <taxon>Rattus</taxon>
    </lineage>
</organism>
<keyword id="KW-0007">Acetylation</keyword>
<keyword id="KW-0963">Cytoplasm</keyword>
<keyword id="KW-0903">Direct protein sequencing</keyword>
<keyword id="KW-0539">Nucleus</keyword>
<keyword id="KW-0597">Phosphoprotein</keyword>
<keyword id="KW-1185">Reference proteome</keyword>
<keyword id="KW-0677">Repeat</keyword>
<keyword id="KW-0804">Transcription</keyword>
<keyword id="KW-0805">Transcription regulation</keyword>
<keyword id="KW-0833">Ubl conjugation pathway</keyword>
<protein>
    <recommendedName>
        <fullName>Cullin-associated NEDD8-dissociated protein 1</fullName>
    </recommendedName>
    <alternativeName>
        <fullName>Cullin-associated and neddylation-dissociated protein 1</fullName>
    </alternativeName>
    <alternativeName>
        <fullName>TBP-interacting protein of 120 kDa A</fullName>
        <shortName>TBP-interacting protein 120A</shortName>
    </alternativeName>
    <alternativeName>
        <fullName>p120 CAND1</fullName>
    </alternativeName>
</protein>
<feature type="initiator methionine" description="Removed" evidence="2">
    <location>
        <position position="1"/>
    </location>
</feature>
<feature type="chain" id="PRO_0000089296" description="Cullin-associated NEDD8-dissociated protein 1">
    <location>
        <begin position="2"/>
        <end position="1230"/>
    </location>
</feature>
<feature type="repeat" description="HEAT 1">
    <location>
        <begin position="2"/>
        <end position="39"/>
    </location>
</feature>
<feature type="repeat" description="HEAT 2">
    <location>
        <begin position="44"/>
        <end position="81"/>
    </location>
</feature>
<feature type="repeat" description="HEAT 3">
    <location>
        <begin position="83"/>
        <end position="119"/>
    </location>
</feature>
<feature type="repeat" description="HEAT 4">
    <location>
        <begin position="131"/>
        <end position="165"/>
    </location>
</feature>
<feature type="repeat" description="HEAT 5">
    <location>
        <begin position="171"/>
        <end position="208"/>
    </location>
</feature>
<feature type="repeat" description="HEAT 6">
    <location>
        <begin position="210"/>
        <end position="247"/>
    </location>
</feature>
<feature type="repeat" description="HEAT 7">
    <location>
        <begin position="248"/>
        <end position="282"/>
    </location>
</feature>
<feature type="repeat" description="HEAT 8">
    <location>
        <begin position="289"/>
        <end position="366"/>
    </location>
</feature>
<feature type="repeat" description="HEAT 9">
    <location>
        <begin position="370"/>
        <end position="407"/>
    </location>
</feature>
<feature type="repeat" description="HEAT 10">
    <location>
        <begin position="424"/>
        <end position="467"/>
    </location>
</feature>
<feature type="repeat" description="HEAT 11">
    <location>
        <begin position="471"/>
        <end position="510"/>
    </location>
</feature>
<feature type="repeat" description="HEAT 12">
    <location>
        <begin position="515"/>
        <end position="552"/>
    </location>
</feature>
<feature type="repeat" description="HEAT 13">
    <location>
        <begin position="563"/>
        <end position="602"/>
    </location>
</feature>
<feature type="repeat" description="HEAT 14">
    <location>
        <begin position="606"/>
        <end position="643"/>
    </location>
</feature>
<feature type="repeat" description="HEAT 15">
    <location>
        <begin position="646"/>
        <end position="683"/>
    </location>
</feature>
<feature type="repeat" description="HEAT 16">
    <location>
        <begin position="688"/>
        <end position="725"/>
    </location>
</feature>
<feature type="repeat" description="HEAT 17">
    <location>
        <begin position="729"/>
        <end position="768"/>
    </location>
</feature>
<feature type="repeat" description="HEAT 18">
    <location>
        <begin position="770"/>
        <end position="808"/>
    </location>
</feature>
<feature type="repeat" description="HEAT 19">
    <location>
        <begin position="809"/>
        <end position="845"/>
    </location>
</feature>
<feature type="repeat" description="HEAT 20">
    <location>
        <begin position="852"/>
        <end position="889"/>
    </location>
</feature>
<feature type="repeat" description="HEAT 21">
    <location>
        <begin position="890"/>
        <end position="927"/>
    </location>
</feature>
<feature type="repeat" description="HEAT 22">
    <location>
        <begin position="928"/>
        <end position="960"/>
    </location>
</feature>
<feature type="repeat" description="HEAT 23">
    <location>
        <begin position="961"/>
        <end position="998"/>
    </location>
</feature>
<feature type="repeat" description="HEAT 24">
    <location>
        <begin position="1002"/>
        <end position="1039"/>
    </location>
</feature>
<feature type="repeat" description="HEAT 25">
    <location>
        <begin position="1043"/>
        <end position="1097"/>
    </location>
</feature>
<feature type="repeat" description="HEAT 26">
    <location>
        <begin position="1099"/>
        <end position="1133"/>
    </location>
</feature>
<feature type="repeat" description="HEAT 27">
    <location>
        <begin position="1140"/>
        <end position="1189"/>
    </location>
</feature>
<feature type="region of interest" description="Disordered" evidence="3">
    <location>
        <begin position="315"/>
        <end position="344"/>
    </location>
</feature>
<feature type="modified residue" description="N-acetylalanine" evidence="2">
    <location>
        <position position="2"/>
    </location>
</feature>
<feature type="modified residue" description="N6-acetyllysine" evidence="2">
    <location>
        <position position="55"/>
    </location>
</feature>
<feature type="modified residue" description="Phosphoserine" evidence="8">
    <location>
        <position position="335"/>
    </location>
</feature>
<feature type="modified residue" description="Phosphoserine" evidence="8">
    <location>
        <position position="558"/>
    </location>
</feature>
<feature type="modified residue" description="N6-acetyllysine" evidence="2">
    <location>
        <position position="971"/>
    </location>
</feature>
<comment type="function">
    <text evidence="1 5">Key assembly factor of SCF (SKP1-CUL1-F-box protein) E3 ubiquitin ligase complexes that promotes the exchange of the substrate-recognition F-box subunit in SCF complexes, thereby playing a key role in the cellular repertoire of SCF complexes. Acts as a F-box protein exchange factor. The exchange activity of CAND1 is coupled with cycles of neddylation conjugation: in the deneddylated state, cullin-binding CAND1 binds CUL1-RBX1, increasing dissociation of the SCF complex and promoting exchange of the F-box protein. Probably plays a similar role in other cullin-RING E3 ubiquitin ligase complexes (By similarity). May indirectly enhance transcription from various types of promoters.</text>
</comment>
<comment type="subunit">
    <text evidence="2 6">Interacts with TBP (PubMed:8954946). Part of a complex that contains CUL1 and RBX1. Interacts with unneddylated cullins: interacts with CUL1, CUL2, CUL3, CUL4A, CUL4B and CUL5. Does not bind neddylated CUL1. Interaction with cullins is abolished in presence of COMMD1, which antagonizes with CAND1 for interacting with cullins. Interacts with ERCC6 (By similarity). Interacts with DCUN1D1, DCUN1D2, DCUN1D3, DCUN1D4 and DCUN1D5; these interactions are bridged by cullins and strongly inhibits the neddylation of cullins (By similarity).</text>
</comment>
<comment type="subcellular location">
    <subcellularLocation>
        <location evidence="2">Cytoplasm</location>
    </subcellularLocation>
    <subcellularLocation>
        <location evidence="2">Nucleus</location>
    </subcellularLocation>
    <text evidence="2">Predominantly cytoplasmic.</text>
</comment>
<comment type="tissue specificity">
    <text evidence="4">Detected in heart, brain, spleen, liver, skeletal muscle, kidney and testis.</text>
</comment>
<comment type="similarity">
    <text evidence="7">Belongs to the CAND family.</text>
</comment>
<gene>
    <name type="primary">Cand1</name>
    <name type="synonym">Tip120</name>
    <name type="synonym">Tip120a</name>
</gene>
<dbReference type="EMBL" id="D87671">
    <property type="protein sequence ID" value="BAA13432.1"/>
    <property type="molecule type" value="mRNA"/>
</dbReference>
<dbReference type="PIR" id="T42735">
    <property type="entry name" value="T42735"/>
</dbReference>
<dbReference type="RefSeq" id="NP_446456.1">
    <property type="nucleotide sequence ID" value="NM_054004.2"/>
</dbReference>
<dbReference type="SMR" id="P97536"/>
<dbReference type="BioGRID" id="250683">
    <property type="interactions" value="6"/>
</dbReference>
<dbReference type="FunCoup" id="P97536">
    <property type="interactions" value="4730"/>
</dbReference>
<dbReference type="IntAct" id="P97536">
    <property type="interactions" value="3"/>
</dbReference>
<dbReference type="MINT" id="P97536"/>
<dbReference type="STRING" id="10116.ENSRNOP00000010720"/>
<dbReference type="GlyGen" id="P97536">
    <property type="glycosylation" value="1 site, 1 O-linked glycan (1 site)"/>
</dbReference>
<dbReference type="iPTMnet" id="P97536"/>
<dbReference type="PhosphoSitePlus" id="P97536"/>
<dbReference type="jPOST" id="P97536"/>
<dbReference type="PaxDb" id="10116-ENSRNOP00000010720"/>
<dbReference type="Ensembl" id="ENSRNOT00000010720.4">
    <property type="protein sequence ID" value="ENSRNOP00000010720.3"/>
    <property type="gene ID" value="ENSRNOG00000007834.6"/>
</dbReference>
<dbReference type="GeneID" id="117152"/>
<dbReference type="KEGG" id="rno:117152"/>
<dbReference type="UCSC" id="RGD:620479">
    <property type="organism name" value="rat"/>
</dbReference>
<dbReference type="AGR" id="RGD:620479"/>
<dbReference type="CTD" id="55832"/>
<dbReference type="RGD" id="620479">
    <property type="gene designation" value="Cand1"/>
</dbReference>
<dbReference type="eggNOG" id="KOG1824">
    <property type="taxonomic scope" value="Eukaryota"/>
</dbReference>
<dbReference type="GeneTree" id="ENSGT00390000017740"/>
<dbReference type="HOGENOM" id="CLU_007157_0_0_1"/>
<dbReference type="InParanoid" id="P97536"/>
<dbReference type="OMA" id="AYIPHFQ"/>
<dbReference type="OrthoDB" id="6260732at2759"/>
<dbReference type="PhylomeDB" id="P97536"/>
<dbReference type="Reactome" id="R-RNO-6798695">
    <property type="pathway name" value="Neutrophil degranulation"/>
</dbReference>
<dbReference type="Reactome" id="R-RNO-8951664">
    <property type="pathway name" value="Neddylation"/>
</dbReference>
<dbReference type="Reactome" id="R-RNO-917937">
    <property type="pathway name" value="Iron uptake and transport"/>
</dbReference>
<dbReference type="PRO" id="PR:P97536"/>
<dbReference type="Proteomes" id="UP000002494">
    <property type="component" value="Chromosome 7"/>
</dbReference>
<dbReference type="Bgee" id="ENSRNOG00000007834">
    <property type="expression patterns" value="Expressed in thymus and 19 other cell types or tissues"/>
</dbReference>
<dbReference type="GO" id="GO:0031461">
    <property type="term" value="C:cullin-RING ubiquitin ligase complex"/>
    <property type="evidence" value="ECO:0000250"/>
    <property type="project" value="UniProtKB"/>
</dbReference>
<dbReference type="GO" id="GO:0005737">
    <property type="term" value="C:cytoplasm"/>
    <property type="evidence" value="ECO:0000250"/>
    <property type="project" value="UniProtKB"/>
</dbReference>
<dbReference type="GO" id="GO:0005829">
    <property type="term" value="C:cytosol"/>
    <property type="evidence" value="ECO:0007669"/>
    <property type="project" value="Ensembl"/>
</dbReference>
<dbReference type="GO" id="GO:0005794">
    <property type="term" value="C:Golgi apparatus"/>
    <property type="evidence" value="ECO:0007669"/>
    <property type="project" value="Ensembl"/>
</dbReference>
<dbReference type="GO" id="GO:0005654">
    <property type="term" value="C:nucleoplasm"/>
    <property type="evidence" value="ECO:0007669"/>
    <property type="project" value="Ensembl"/>
</dbReference>
<dbReference type="GO" id="GO:0005634">
    <property type="term" value="C:nucleus"/>
    <property type="evidence" value="ECO:0000250"/>
    <property type="project" value="UniProtKB"/>
</dbReference>
<dbReference type="GO" id="GO:0000151">
    <property type="term" value="C:ubiquitin ligase complex"/>
    <property type="evidence" value="ECO:0000250"/>
    <property type="project" value="UniProtKB"/>
</dbReference>
<dbReference type="GO" id="GO:0017025">
    <property type="term" value="F:TBP-class protein binding"/>
    <property type="evidence" value="ECO:0000314"/>
    <property type="project" value="RGD"/>
</dbReference>
<dbReference type="GO" id="GO:0030154">
    <property type="term" value="P:cell differentiation"/>
    <property type="evidence" value="ECO:0000250"/>
    <property type="project" value="UniProtKB"/>
</dbReference>
<dbReference type="GO" id="GO:0043086">
    <property type="term" value="P:negative regulation of catalytic activity"/>
    <property type="evidence" value="ECO:0000250"/>
    <property type="project" value="UniProtKB"/>
</dbReference>
<dbReference type="GO" id="GO:0045893">
    <property type="term" value="P:positive regulation of DNA-templated transcription"/>
    <property type="evidence" value="ECO:0000314"/>
    <property type="project" value="UniProtKB"/>
</dbReference>
<dbReference type="GO" id="GO:0045899">
    <property type="term" value="P:positive regulation of RNA polymerase II transcription preinitiation complex assembly"/>
    <property type="evidence" value="ECO:0000314"/>
    <property type="project" value="UniProtKB"/>
</dbReference>
<dbReference type="GO" id="GO:0016567">
    <property type="term" value="P:protein ubiquitination"/>
    <property type="evidence" value="ECO:0000250"/>
    <property type="project" value="UniProtKB"/>
</dbReference>
<dbReference type="GO" id="GO:0010265">
    <property type="term" value="P:SCF complex assembly"/>
    <property type="evidence" value="ECO:0000250"/>
    <property type="project" value="UniProtKB"/>
</dbReference>
<dbReference type="FunFam" id="1.25.10.10:FF:000047">
    <property type="entry name" value="Cullin-associated NEDD8-dissociated protein 1"/>
    <property type="match status" value="1"/>
</dbReference>
<dbReference type="Gene3D" id="1.25.10.10">
    <property type="entry name" value="Leucine-rich Repeat Variant"/>
    <property type="match status" value="1"/>
</dbReference>
<dbReference type="InterPro" id="IPR011989">
    <property type="entry name" value="ARM-like"/>
</dbReference>
<dbReference type="InterPro" id="IPR016024">
    <property type="entry name" value="ARM-type_fold"/>
</dbReference>
<dbReference type="InterPro" id="IPR039852">
    <property type="entry name" value="CAND1/CAND2"/>
</dbReference>
<dbReference type="InterPro" id="IPR013932">
    <property type="entry name" value="TATA-bd_TIP120"/>
</dbReference>
<dbReference type="PANTHER" id="PTHR12696">
    <property type="entry name" value="TIP120"/>
    <property type="match status" value="1"/>
</dbReference>
<dbReference type="Pfam" id="PF13513">
    <property type="entry name" value="HEAT_EZ"/>
    <property type="match status" value="1"/>
</dbReference>
<dbReference type="Pfam" id="PF08623">
    <property type="entry name" value="TIP120"/>
    <property type="match status" value="1"/>
</dbReference>
<dbReference type="SUPFAM" id="SSF48371">
    <property type="entry name" value="ARM repeat"/>
    <property type="match status" value="1"/>
</dbReference>